<comment type="function">
    <text evidence="4">During the development in the mosquito midgut, plays a role in sporozoite egress from oocysts.</text>
</comment>
<comment type="subcellular location">
    <subcellularLocation>
        <location evidence="1">Membrane</location>
        <topology evidence="6">Single-pass type II membrane protein</topology>
    </subcellularLocation>
</comment>
<comment type="developmental stage">
    <text evidence="4">In the mosquito vector, expressed at the ookinete stage.</text>
</comment>
<comment type="disruption phenotype">
    <text evidence="4">In the mosquito midgut, number of oocysts is normal (PubMed:18761621). However, oocyst appears immature, enlarged, degenerated or vacuolated, and fails to sporulate resulting in a lack of sporozoites (PubMed:18761621).</text>
</comment>
<comment type="similarity">
    <text evidence="3">Belongs to the peptidase A1 family.</text>
</comment>
<comment type="caution">
    <text evidence="6">It is unclear if PMVI is glycosylated as other members of the same enzyme family, i.e. PMI and PMII, are not.</text>
</comment>
<feature type="propeptide" id="PRO_0000454299" evidence="6">
    <location>
        <begin position="1"/>
        <end status="unknown"/>
    </location>
</feature>
<feature type="chain" id="PRO_0000454300" description="Plasmepsin VI">
    <location>
        <begin status="unknown"/>
        <end position="441"/>
    </location>
</feature>
<feature type="topological domain" description="Cytoplasmic" evidence="6">
    <location>
        <begin position="1"/>
        <end position="7"/>
    </location>
</feature>
<feature type="transmembrane region" description="Helical; Signal-anchor for type II membrane protein" evidence="1">
    <location>
        <begin position="8"/>
        <end position="28"/>
    </location>
</feature>
<feature type="topological domain" description="Extracellular" evidence="6">
    <location>
        <begin position="29"/>
        <end position="441"/>
    </location>
</feature>
<feature type="domain" description="Peptidase A1" evidence="2">
    <location>
        <begin position="109"/>
        <end position="435"/>
    </location>
</feature>
<feature type="active site" evidence="2">
    <location>
        <position position="127"/>
    </location>
</feature>
<feature type="active site" evidence="2">
    <location>
        <position position="324"/>
    </location>
</feature>
<organism evidence="8">
    <name type="scientific">Plasmodium berghei (strain Anka)</name>
    <dbReference type="NCBI Taxonomy" id="5823"/>
    <lineage>
        <taxon>Eukaryota</taxon>
        <taxon>Sar</taxon>
        <taxon>Alveolata</taxon>
        <taxon>Apicomplexa</taxon>
        <taxon>Aconoidasida</taxon>
        <taxon>Haemosporida</taxon>
        <taxon>Plasmodiidae</taxon>
        <taxon>Plasmodium</taxon>
        <taxon>Plasmodium (Vinckeia)</taxon>
    </lineage>
</organism>
<gene>
    <name evidence="6" type="primary">PMVI</name>
    <name evidence="5" type="synonym">ASP</name>
    <name evidence="7" type="ORF">PBANKA_0409700</name>
</gene>
<sequence>MTNFCIKSYLFLYLSFLLFFDIITIFHVSSIRISTVLKNDKKKKNFNTSLVEENKKYLFNEIKLNNRFKNDIKGYIQNINNFHSIIESKIPNSLLYVHEDLINFHNSQFIGDIEIGNPPQSFKVVFDTGSSNFAIPSTKCVKGGCTLHNKFDAKKSRTFMSNLKNKKESIYTYVQYGTGKSILEHGYDDVYMKGLKINKQCIGLIIEESMHPFSDLPFDGIVGLGFSDPDNSFQTKYSKSLIETIKEQNLLQQNIFSFYVPKELEKSGAITFGRANSKYAIEGEKIEWFPVISMYFWEINLLGILLPDKNFEICSNKKCRAAVDTGSSLITGPSSLMQPLIENINLEKDCSNISSLPIISFVLKNVEGKTVILDFTPDDYILQENSEEDNSSQCVIGLMSLDIPPPRGPIFIFGNVFIRKYYTIFDNDHKLVGVVKSNHNF</sequence>
<accession>A0A509AI82</accession>
<reference evidence="8" key="1">
    <citation type="journal article" date="2014" name="BMC Biol.">
        <title>A comprehensive evaluation of rodent malaria parasite genomes and gene expression.</title>
        <authorList>
            <person name="Otto T.D."/>
            <person name="Bohme U."/>
            <person name="Jackson A.P."/>
            <person name="Hunt M."/>
            <person name="Franke-Fayard B."/>
            <person name="Hoeijmakers W.A."/>
            <person name="Religa A.A."/>
            <person name="Robertson L."/>
            <person name="Sanders M."/>
            <person name="Ogun S.A."/>
            <person name="Cunningham D."/>
            <person name="Erhart A."/>
            <person name="Billker O."/>
            <person name="Khan S.M."/>
            <person name="Stunnenberg H.G."/>
            <person name="Langhorne J."/>
            <person name="Holder A.A."/>
            <person name="Waters A.P."/>
            <person name="Newbold C.I."/>
            <person name="Pain A."/>
            <person name="Berriman M."/>
            <person name="Janse C.J."/>
        </authorList>
    </citation>
    <scope>NUCLEOTIDE SEQUENCE [LARGE SCALE GENOMIC DNA]</scope>
    <source>
        <strain evidence="8">ANKA</strain>
    </source>
</reference>
<reference evidence="6" key="2">
    <citation type="journal article" date="2008" name="Mol. Microbiol.">
        <title>Reverse genetics screen identifies six proteins important for malaria development in the mosquito.</title>
        <authorList>
            <person name="Ecker A."/>
            <person name="Bushell E.S."/>
            <person name="Tewari R."/>
            <person name="Sinden R.E."/>
        </authorList>
    </citation>
    <scope>FUNCTION</scope>
    <scope>DEVELOPMENTAL STAGE</scope>
    <scope>DISRUPTION PHENOTYPE</scope>
</reference>
<proteinExistence type="evidence at transcript level"/>
<name>PLM6_PLABA</name>
<dbReference type="EC" id="3.4.23.-" evidence="6"/>
<dbReference type="EMBL" id="LK023119">
    <property type="protein sequence ID" value="VUC54321.1"/>
    <property type="molecule type" value="Genomic_DNA"/>
</dbReference>
<dbReference type="SMR" id="A0A509AI82"/>
<dbReference type="STRING" id="5823.A0A509AI82"/>
<dbReference type="VEuPathDB" id="PlasmoDB:PBANKA_0409700"/>
<dbReference type="InParanoid" id="A0A509AI82"/>
<dbReference type="OMA" id="DMQYYGE"/>
<dbReference type="Proteomes" id="UP000074855">
    <property type="component" value="Chromosome 4"/>
</dbReference>
<dbReference type="GO" id="GO:0016020">
    <property type="term" value="C:membrane"/>
    <property type="evidence" value="ECO:0007669"/>
    <property type="project" value="UniProtKB-SubCell"/>
</dbReference>
<dbReference type="GO" id="GO:0004190">
    <property type="term" value="F:aspartic-type endopeptidase activity"/>
    <property type="evidence" value="ECO:0007669"/>
    <property type="project" value="UniProtKB-KW"/>
</dbReference>
<dbReference type="GO" id="GO:0006508">
    <property type="term" value="P:proteolysis"/>
    <property type="evidence" value="ECO:0007669"/>
    <property type="project" value="UniProtKB-KW"/>
</dbReference>
<dbReference type="FunFam" id="2.40.70.10:FF:000115">
    <property type="entry name" value="Lysosomal aspartic protease"/>
    <property type="match status" value="1"/>
</dbReference>
<dbReference type="Gene3D" id="2.40.70.10">
    <property type="entry name" value="Acid Proteases"/>
    <property type="match status" value="2"/>
</dbReference>
<dbReference type="InterPro" id="IPR001461">
    <property type="entry name" value="Aspartic_peptidase_A1"/>
</dbReference>
<dbReference type="InterPro" id="IPR001969">
    <property type="entry name" value="Aspartic_peptidase_AS"/>
</dbReference>
<dbReference type="InterPro" id="IPR033121">
    <property type="entry name" value="PEPTIDASE_A1"/>
</dbReference>
<dbReference type="InterPro" id="IPR021109">
    <property type="entry name" value="Peptidase_aspartic_dom_sf"/>
</dbReference>
<dbReference type="PANTHER" id="PTHR47966">
    <property type="entry name" value="BETA-SITE APP-CLEAVING ENZYME, ISOFORM A-RELATED"/>
    <property type="match status" value="1"/>
</dbReference>
<dbReference type="PANTHER" id="PTHR47966:SF51">
    <property type="entry name" value="BETA-SITE APP-CLEAVING ENZYME, ISOFORM A-RELATED"/>
    <property type="match status" value="1"/>
</dbReference>
<dbReference type="Pfam" id="PF00026">
    <property type="entry name" value="Asp"/>
    <property type="match status" value="1"/>
</dbReference>
<dbReference type="PRINTS" id="PR00792">
    <property type="entry name" value="PEPSIN"/>
</dbReference>
<dbReference type="SUPFAM" id="SSF50630">
    <property type="entry name" value="Acid proteases"/>
    <property type="match status" value="1"/>
</dbReference>
<dbReference type="PROSITE" id="PS00141">
    <property type="entry name" value="ASP_PROTEASE"/>
    <property type="match status" value="2"/>
</dbReference>
<dbReference type="PROSITE" id="PS51767">
    <property type="entry name" value="PEPTIDASE_A1"/>
    <property type="match status" value="1"/>
</dbReference>
<protein>
    <recommendedName>
        <fullName evidence="6">Plasmepsin VI</fullName>
        <ecNumber evidence="6">3.4.23.-</ecNumber>
    </recommendedName>
    <alternativeName>
        <fullName evidence="6">Plasmepsin 6</fullName>
    </alternativeName>
</protein>
<evidence type="ECO:0000255" key="1"/>
<evidence type="ECO:0000255" key="2">
    <source>
        <dbReference type="PROSITE-ProRule" id="PRU01103"/>
    </source>
</evidence>
<evidence type="ECO:0000255" key="3">
    <source>
        <dbReference type="RuleBase" id="RU000454"/>
    </source>
</evidence>
<evidence type="ECO:0000269" key="4">
    <source>
    </source>
</evidence>
<evidence type="ECO:0000303" key="5">
    <source>
    </source>
</evidence>
<evidence type="ECO:0000305" key="6"/>
<evidence type="ECO:0000312" key="7">
    <source>
        <dbReference type="EMBL" id="VUC54321.1"/>
    </source>
</evidence>
<evidence type="ECO:0000312" key="8">
    <source>
        <dbReference type="Proteomes" id="UP000074855"/>
    </source>
</evidence>
<keyword id="KW-0064">Aspartyl protease</keyword>
<keyword id="KW-0378">Hydrolase</keyword>
<keyword id="KW-0472">Membrane</keyword>
<keyword id="KW-0645">Protease</keyword>
<keyword id="KW-1185">Reference proteome</keyword>
<keyword id="KW-0735">Signal-anchor</keyword>
<keyword id="KW-0812">Transmembrane</keyword>
<keyword id="KW-1133">Transmembrane helix</keyword>
<keyword id="KW-0865">Zymogen</keyword>